<organism>
    <name type="scientific">Geobacillus thermodenitrificans (strain NG80-2)</name>
    <dbReference type="NCBI Taxonomy" id="420246"/>
    <lineage>
        <taxon>Bacteria</taxon>
        <taxon>Bacillati</taxon>
        <taxon>Bacillota</taxon>
        <taxon>Bacilli</taxon>
        <taxon>Bacillales</taxon>
        <taxon>Anoxybacillaceae</taxon>
        <taxon>Geobacillus</taxon>
    </lineage>
</organism>
<evidence type="ECO:0000255" key="1">
    <source>
        <dbReference type="HAMAP-Rule" id="MF_00315"/>
    </source>
</evidence>
<feature type="chain" id="PRO_1000019030" description="1-deoxy-D-xylulose-5-phosphate synthase">
    <location>
        <begin position="1"/>
        <end position="630"/>
    </location>
</feature>
<feature type="binding site" evidence="1">
    <location>
        <position position="72"/>
    </location>
    <ligand>
        <name>thiamine diphosphate</name>
        <dbReference type="ChEBI" id="CHEBI:58937"/>
    </ligand>
</feature>
<feature type="binding site" evidence="1">
    <location>
        <begin position="113"/>
        <end position="115"/>
    </location>
    <ligand>
        <name>thiamine diphosphate</name>
        <dbReference type="ChEBI" id="CHEBI:58937"/>
    </ligand>
</feature>
<feature type="binding site" evidence="1">
    <location>
        <position position="144"/>
    </location>
    <ligand>
        <name>Mg(2+)</name>
        <dbReference type="ChEBI" id="CHEBI:18420"/>
    </ligand>
</feature>
<feature type="binding site" evidence="1">
    <location>
        <begin position="145"/>
        <end position="146"/>
    </location>
    <ligand>
        <name>thiamine diphosphate</name>
        <dbReference type="ChEBI" id="CHEBI:58937"/>
    </ligand>
</feature>
<feature type="binding site" evidence="1">
    <location>
        <position position="173"/>
    </location>
    <ligand>
        <name>Mg(2+)</name>
        <dbReference type="ChEBI" id="CHEBI:18420"/>
    </ligand>
</feature>
<feature type="binding site" evidence="1">
    <location>
        <position position="173"/>
    </location>
    <ligand>
        <name>thiamine diphosphate</name>
        <dbReference type="ChEBI" id="CHEBI:58937"/>
    </ligand>
</feature>
<feature type="binding site" evidence="1">
    <location>
        <position position="284"/>
    </location>
    <ligand>
        <name>thiamine diphosphate</name>
        <dbReference type="ChEBI" id="CHEBI:58937"/>
    </ligand>
</feature>
<feature type="binding site" evidence="1">
    <location>
        <position position="367"/>
    </location>
    <ligand>
        <name>thiamine diphosphate</name>
        <dbReference type="ChEBI" id="CHEBI:58937"/>
    </ligand>
</feature>
<name>DXS_GEOTN</name>
<dbReference type="EC" id="2.2.1.7" evidence="1"/>
<dbReference type="EMBL" id="CP000557">
    <property type="protein sequence ID" value="ABO67671.1"/>
    <property type="molecule type" value="Genomic_DNA"/>
</dbReference>
<dbReference type="RefSeq" id="WP_011887782.1">
    <property type="nucleotide sequence ID" value="NC_009328.1"/>
</dbReference>
<dbReference type="SMR" id="A4IQR7"/>
<dbReference type="GeneID" id="87623581"/>
<dbReference type="KEGG" id="gtn:GTNG_2322"/>
<dbReference type="eggNOG" id="COG1154">
    <property type="taxonomic scope" value="Bacteria"/>
</dbReference>
<dbReference type="HOGENOM" id="CLU_009227_1_4_9"/>
<dbReference type="UniPathway" id="UPA00064">
    <property type="reaction ID" value="UER00091"/>
</dbReference>
<dbReference type="Proteomes" id="UP000001578">
    <property type="component" value="Chromosome"/>
</dbReference>
<dbReference type="GO" id="GO:0005829">
    <property type="term" value="C:cytosol"/>
    <property type="evidence" value="ECO:0007669"/>
    <property type="project" value="TreeGrafter"/>
</dbReference>
<dbReference type="GO" id="GO:0008661">
    <property type="term" value="F:1-deoxy-D-xylulose-5-phosphate synthase activity"/>
    <property type="evidence" value="ECO:0007669"/>
    <property type="project" value="UniProtKB-UniRule"/>
</dbReference>
<dbReference type="GO" id="GO:0000287">
    <property type="term" value="F:magnesium ion binding"/>
    <property type="evidence" value="ECO:0007669"/>
    <property type="project" value="UniProtKB-UniRule"/>
</dbReference>
<dbReference type="GO" id="GO:0030976">
    <property type="term" value="F:thiamine pyrophosphate binding"/>
    <property type="evidence" value="ECO:0007669"/>
    <property type="project" value="UniProtKB-UniRule"/>
</dbReference>
<dbReference type="GO" id="GO:0052865">
    <property type="term" value="P:1-deoxy-D-xylulose 5-phosphate biosynthetic process"/>
    <property type="evidence" value="ECO:0007669"/>
    <property type="project" value="UniProtKB-UniPathway"/>
</dbReference>
<dbReference type="GO" id="GO:0019288">
    <property type="term" value="P:isopentenyl diphosphate biosynthetic process, methylerythritol 4-phosphate pathway"/>
    <property type="evidence" value="ECO:0007669"/>
    <property type="project" value="TreeGrafter"/>
</dbReference>
<dbReference type="GO" id="GO:0016114">
    <property type="term" value="P:terpenoid biosynthetic process"/>
    <property type="evidence" value="ECO:0007669"/>
    <property type="project" value="UniProtKB-UniRule"/>
</dbReference>
<dbReference type="GO" id="GO:0009228">
    <property type="term" value="P:thiamine biosynthetic process"/>
    <property type="evidence" value="ECO:0007669"/>
    <property type="project" value="UniProtKB-UniRule"/>
</dbReference>
<dbReference type="CDD" id="cd02007">
    <property type="entry name" value="TPP_DXS"/>
    <property type="match status" value="1"/>
</dbReference>
<dbReference type="CDD" id="cd07033">
    <property type="entry name" value="TPP_PYR_DXS_TK_like"/>
    <property type="match status" value="1"/>
</dbReference>
<dbReference type="FunFam" id="3.40.50.920:FF:000002">
    <property type="entry name" value="1-deoxy-D-xylulose-5-phosphate synthase"/>
    <property type="match status" value="1"/>
</dbReference>
<dbReference type="FunFam" id="3.40.50.970:FF:000030">
    <property type="entry name" value="1-deoxy-D-xylulose-5-phosphate synthase"/>
    <property type="match status" value="1"/>
</dbReference>
<dbReference type="Gene3D" id="3.40.50.920">
    <property type="match status" value="1"/>
</dbReference>
<dbReference type="Gene3D" id="3.40.50.970">
    <property type="match status" value="2"/>
</dbReference>
<dbReference type="HAMAP" id="MF_00315">
    <property type="entry name" value="DXP_synth"/>
    <property type="match status" value="1"/>
</dbReference>
<dbReference type="InterPro" id="IPR005477">
    <property type="entry name" value="Dxylulose-5-P_synthase"/>
</dbReference>
<dbReference type="InterPro" id="IPR029061">
    <property type="entry name" value="THDP-binding"/>
</dbReference>
<dbReference type="InterPro" id="IPR009014">
    <property type="entry name" value="Transketo_C/PFOR_II"/>
</dbReference>
<dbReference type="InterPro" id="IPR005475">
    <property type="entry name" value="Transketolase-like_Pyr-bd"/>
</dbReference>
<dbReference type="InterPro" id="IPR020826">
    <property type="entry name" value="Transketolase_BS"/>
</dbReference>
<dbReference type="InterPro" id="IPR033248">
    <property type="entry name" value="Transketolase_C"/>
</dbReference>
<dbReference type="InterPro" id="IPR049557">
    <property type="entry name" value="Transketolase_CS"/>
</dbReference>
<dbReference type="NCBIfam" id="TIGR00204">
    <property type="entry name" value="dxs"/>
    <property type="match status" value="1"/>
</dbReference>
<dbReference type="NCBIfam" id="NF003933">
    <property type="entry name" value="PRK05444.2-2"/>
    <property type="match status" value="1"/>
</dbReference>
<dbReference type="PANTHER" id="PTHR43322">
    <property type="entry name" value="1-D-DEOXYXYLULOSE 5-PHOSPHATE SYNTHASE-RELATED"/>
    <property type="match status" value="1"/>
</dbReference>
<dbReference type="PANTHER" id="PTHR43322:SF5">
    <property type="entry name" value="1-DEOXY-D-XYLULOSE-5-PHOSPHATE SYNTHASE, CHLOROPLASTIC"/>
    <property type="match status" value="1"/>
</dbReference>
<dbReference type="Pfam" id="PF13292">
    <property type="entry name" value="DXP_synthase_N"/>
    <property type="match status" value="1"/>
</dbReference>
<dbReference type="Pfam" id="PF02779">
    <property type="entry name" value="Transket_pyr"/>
    <property type="match status" value="1"/>
</dbReference>
<dbReference type="Pfam" id="PF02780">
    <property type="entry name" value="Transketolase_C"/>
    <property type="match status" value="1"/>
</dbReference>
<dbReference type="SMART" id="SM00861">
    <property type="entry name" value="Transket_pyr"/>
    <property type="match status" value="1"/>
</dbReference>
<dbReference type="SUPFAM" id="SSF52518">
    <property type="entry name" value="Thiamin diphosphate-binding fold (THDP-binding)"/>
    <property type="match status" value="2"/>
</dbReference>
<dbReference type="SUPFAM" id="SSF52922">
    <property type="entry name" value="TK C-terminal domain-like"/>
    <property type="match status" value="1"/>
</dbReference>
<dbReference type="PROSITE" id="PS00801">
    <property type="entry name" value="TRANSKETOLASE_1"/>
    <property type="match status" value="1"/>
</dbReference>
<dbReference type="PROSITE" id="PS00802">
    <property type="entry name" value="TRANSKETOLASE_2"/>
    <property type="match status" value="1"/>
</dbReference>
<gene>
    <name evidence="1" type="primary">dxs</name>
    <name type="ordered locus">GTNG_2322</name>
</gene>
<keyword id="KW-0414">Isoprene biosynthesis</keyword>
<keyword id="KW-0460">Magnesium</keyword>
<keyword id="KW-0479">Metal-binding</keyword>
<keyword id="KW-0784">Thiamine biosynthesis</keyword>
<keyword id="KW-0786">Thiamine pyrophosphate</keyword>
<keyword id="KW-0808">Transferase</keyword>
<protein>
    <recommendedName>
        <fullName evidence="1">1-deoxy-D-xylulose-5-phosphate synthase</fullName>
        <ecNumber evidence="1">2.2.1.7</ecNumber>
    </recommendedName>
    <alternativeName>
        <fullName evidence="1">1-deoxyxylulose-5-phosphate synthase</fullName>
        <shortName evidence="1">DXP synthase</shortName>
        <shortName evidence="1">DXPS</shortName>
    </alternativeName>
</protein>
<reference key="1">
    <citation type="journal article" date="2007" name="Proc. Natl. Acad. Sci. U.S.A.">
        <title>Genome and proteome of long-chain alkane degrading Geobacillus thermodenitrificans NG80-2 isolated from a deep-subsurface oil reservoir.</title>
        <authorList>
            <person name="Feng L."/>
            <person name="Wang W."/>
            <person name="Cheng J."/>
            <person name="Ren Y."/>
            <person name="Zhao G."/>
            <person name="Gao C."/>
            <person name="Tang Y."/>
            <person name="Liu X."/>
            <person name="Han W."/>
            <person name="Peng X."/>
            <person name="Liu R."/>
            <person name="Wang L."/>
        </authorList>
    </citation>
    <scope>NUCLEOTIDE SEQUENCE [LARGE SCALE GENOMIC DNA]</scope>
    <source>
        <strain>NG80-2</strain>
    </source>
</reference>
<comment type="function">
    <text evidence="1">Catalyzes the acyloin condensation reaction between C atoms 2 and 3 of pyruvate and glyceraldehyde 3-phosphate to yield 1-deoxy-D-xylulose-5-phosphate (DXP).</text>
</comment>
<comment type="catalytic activity">
    <reaction evidence="1">
        <text>D-glyceraldehyde 3-phosphate + pyruvate + H(+) = 1-deoxy-D-xylulose 5-phosphate + CO2</text>
        <dbReference type="Rhea" id="RHEA:12605"/>
        <dbReference type="ChEBI" id="CHEBI:15361"/>
        <dbReference type="ChEBI" id="CHEBI:15378"/>
        <dbReference type="ChEBI" id="CHEBI:16526"/>
        <dbReference type="ChEBI" id="CHEBI:57792"/>
        <dbReference type="ChEBI" id="CHEBI:59776"/>
        <dbReference type="EC" id="2.2.1.7"/>
    </reaction>
</comment>
<comment type="cofactor">
    <cofactor evidence="1">
        <name>Mg(2+)</name>
        <dbReference type="ChEBI" id="CHEBI:18420"/>
    </cofactor>
    <text evidence="1">Binds 1 Mg(2+) ion per subunit.</text>
</comment>
<comment type="cofactor">
    <cofactor evidence="1">
        <name>thiamine diphosphate</name>
        <dbReference type="ChEBI" id="CHEBI:58937"/>
    </cofactor>
    <text evidence="1">Binds 1 thiamine pyrophosphate per subunit.</text>
</comment>
<comment type="pathway">
    <text evidence="1">Metabolic intermediate biosynthesis; 1-deoxy-D-xylulose 5-phosphate biosynthesis; 1-deoxy-D-xylulose 5-phosphate from D-glyceraldehyde 3-phosphate and pyruvate: step 1/1.</text>
</comment>
<comment type="subunit">
    <text evidence="1">Homodimer.</text>
</comment>
<comment type="similarity">
    <text evidence="1">Belongs to the transketolase family. DXPS subfamily.</text>
</comment>
<accession>A4IQR7</accession>
<proteinExistence type="inferred from homology"/>
<sequence length="630" mass="69397">MDLTKIEHPRVVKTMSIPQLKQLSADIRRFLIEKLSKTGGHIGPNLGVVELTIALHREFDSPKDKLIWDVGHQSYVHKILTGRAAEFDTLRQYKGLSGFPKRSESEHDVWETGHSSTSLSAAMGMAIARDLKGTDEYIVPIIGDGALTGGMALEALNHIGHEKTDMIVILNDNEMSIAPNVGALHNILGRLRTAGKYQWVKDELELLLKRIPAVGGKLAATAERLKDSLKYLLVSGVFFEELGFTYLGPVDGHDFEDLLENLRYAKKVKGPVLVHVITKKGKGYSPAENDKVGTWHGTGPYKIETGTFVKTKEGGPSWSGLVSETVRRIARTDPRIVAITPAMPVGSKLEGFASEFPDRMFDVGIAEQHATTLAAGLATQGMKPFLAIYSTFLQRAYDQVVHDVCRQNLNVFFAIDRAGLVGADGETHQGVFDIAFLRHVPNLVLMMPKDENEGQHMVYTALRYDDGPIAMRFPRGNGLGVPLDEELKEIPIGTWEVLRDGSDAVILTFGTTISMALEAAEQLARDGVSVKVVNARFLKPMDEAMLHELLESRLPILTIEEAVLQGGFGSSVLEFAHDHGYHQAVIERMGIPDRFIEHGSVSELLDEIGLTAAHVADRIKTIMPRKQKRA</sequence>